<comment type="function">
    <text evidence="1">Catalyzes the 2'-O-methylation at nucleotide C2498 in 23S rRNA.</text>
</comment>
<comment type="catalytic activity">
    <reaction evidence="1">
        <text>cytidine(2498) in 23S rRNA + S-adenosyl-L-methionine = 2'-O-methylcytidine(2498) in 23S rRNA + S-adenosyl-L-homocysteine + H(+)</text>
        <dbReference type="Rhea" id="RHEA:42788"/>
        <dbReference type="Rhea" id="RHEA-COMP:10244"/>
        <dbReference type="Rhea" id="RHEA-COMP:10245"/>
        <dbReference type="ChEBI" id="CHEBI:15378"/>
        <dbReference type="ChEBI" id="CHEBI:57856"/>
        <dbReference type="ChEBI" id="CHEBI:59789"/>
        <dbReference type="ChEBI" id="CHEBI:74495"/>
        <dbReference type="ChEBI" id="CHEBI:82748"/>
        <dbReference type="EC" id="2.1.1.186"/>
    </reaction>
</comment>
<comment type="subunit">
    <text evidence="1">Monomer.</text>
</comment>
<comment type="subcellular location">
    <subcellularLocation>
        <location evidence="1">Cytoplasm</location>
    </subcellularLocation>
</comment>
<comment type="similarity">
    <text evidence="1">Belongs to the class I-like SAM-binding methyltransferase superfamily. RNA methyltransferase RlmE family. RlmM subfamily.</text>
</comment>
<reference key="1">
    <citation type="submission" date="2006-03" db="EMBL/GenBank/DDBJ databases">
        <title>Complete sequence of Shewanella denitrificans OS217.</title>
        <authorList>
            <consortium name="US DOE Joint Genome Institute"/>
            <person name="Copeland A."/>
            <person name="Lucas S."/>
            <person name="Lapidus A."/>
            <person name="Barry K."/>
            <person name="Detter J.C."/>
            <person name="Glavina del Rio T."/>
            <person name="Hammon N."/>
            <person name="Israni S."/>
            <person name="Dalin E."/>
            <person name="Tice H."/>
            <person name="Pitluck S."/>
            <person name="Brettin T."/>
            <person name="Bruce D."/>
            <person name="Han C."/>
            <person name="Tapia R."/>
            <person name="Gilna P."/>
            <person name="Kiss H."/>
            <person name="Schmutz J."/>
            <person name="Larimer F."/>
            <person name="Land M."/>
            <person name="Hauser L."/>
            <person name="Kyrpides N."/>
            <person name="Lykidis A."/>
            <person name="Richardson P."/>
        </authorList>
    </citation>
    <scope>NUCLEOTIDE SEQUENCE [LARGE SCALE GENOMIC DNA]</scope>
    <source>
        <strain>OS217 / ATCC BAA-1090 / DSM 15013</strain>
    </source>
</reference>
<name>RLMM_SHEDO</name>
<proteinExistence type="inferred from homology"/>
<evidence type="ECO:0000255" key="1">
    <source>
        <dbReference type="HAMAP-Rule" id="MF_01551"/>
    </source>
</evidence>
<gene>
    <name evidence="1" type="primary">rlmM</name>
    <name type="ordered locus">Sden_2562</name>
</gene>
<sequence>MKNLFLFCRAGYEKECAAEIQQRAAEMNVGGFVKTTNNDAYVIYQCFEDDGADTLAKMLPLNSLIFARQMFAASELHSDLPEQDRVGPLVASLLEADVTKCGELRVETPDTNEAKELSAFCRKFTVPLRQGLKKVGVLLDKENGRRPIIHVCFVGPGKAYVGYSLSNNSSPHFMGIPRLRMAADAPSRSSLKLDEAFGAFLTKEEQEMRCRSGLKAVDLGACPGGWTYQLVRRGMMVAAVDNGPMDEKLMETGQVKHYRADGFRFEPPRKNIYWLVCDMVEKPSRVAELMEAWAINGWFKEAIFNLKLPMKSRYKEVRVILDTMGEIFKENEIDYRLQCKHLYHDRDEVTVHLWIFPEKGVSYAEMG</sequence>
<feature type="chain" id="PRO_0000314536" description="Ribosomal RNA large subunit methyltransferase M">
    <location>
        <begin position="1"/>
        <end position="367"/>
    </location>
</feature>
<feature type="active site" description="Proton acceptor" evidence="1">
    <location>
        <position position="307"/>
    </location>
</feature>
<feature type="binding site" evidence="1">
    <location>
        <position position="189"/>
    </location>
    <ligand>
        <name>S-adenosyl-L-methionine</name>
        <dbReference type="ChEBI" id="CHEBI:59789"/>
    </ligand>
</feature>
<feature type="binding site" evidence="1">
    <location>
        <begin position="222"/>
        <end position="225"/>
    </location>
    <ligand>
        <name>S-adenosyl-L-methionine</name>
        <dbReference type="ChEBI" id="CHEBI:59789"/>
    </ligand>
</feature>
<feature type="binding site" evidence="1">
    <location>
        <position position="241"/>
    </location>
    <ligand>
        <name>S-adenosyl-L-methionine</name>
        <dbReference type="ChEBI" id="CHEBI:59789"/>
    </ligand>
</feature>
<feature type="binding site" evidence="1">
    <location>
        <position position="261"/>
    </location>
    <ligand>
        <name>S-adenosyl-L-methionine</name>
        <dbReference type="ChEBI" id="CHEBI:59789"/>
    </ligand>
</feature>
<feature type="binding site" evidence="1">
    <location>
        <position position="278"/>
    </location>
    <ligand>
        <name>S-adenosyl-L-methionine</name>
        <dbReference type="ChEBI" id="CHEBI:59789"/>
    </ligand>
</feature>
<dbReference type="EC" id="2.1.1.186" evidence="1"/>
<dbReference type="EMBL" id="CP000302">
    <property type="protein sequence ID" value="ABE55841.1"/>
    <property type="molecule type" value="Genomic_DNA"/>
</dbReference>
<dbReference type="RefSeq" id="WP_011496992.1">
    <property type="nucleotide sequence ID" value="NC_007954.1"/>
</dbReference>
<dbReference type="SMR" id="Q12L35"/>
<dbReference type="STRING" id="318161.Sden_2562"/>
<dbReference type="DNASU" id="4019079"/>
<dbReference type="KEGG" id="sdn:Sden_2562"/>
<dbReference type="eggNOG" id="COG2933">
    <property type="taxonomic scope" value="Bacteria"/>
</dbReference>
<dbReference type="HOGENOM" id="CLU_043780_0_0_6"/>
<dbReference type="OrthoDB" id="154490at2"/>
<dbReference type="Proteomes" id="UP000001982">
    <property type="component" value="Chromosome"/>
</dbReference>
<dbReference type="GO" id="GO:0005737">
    <property type="term" value="C:cytoplasm"/>
    <property type="evidence" value="ECO:0007669"/>
    <property type="project" value="UniProtKB-SubCell"/>
</dbReference>
<dbReference type="GO" id="GO:0008757">
    <property type="term" value="F:S-adenosylmethionine-dependent methyltransferase activity"/>
    <property type="evidence" value="ECO:0007669"/>
    <property type="project" value="UniProtKB-UniRule"/>
</dbReference>
<dbReference type="GO" id="GO:0032259">
    <property type="term" value="P:methylation"/>
    <property type="evidence" value="ECO:0007669"/>
    <property type="project" value="UniProtKB-KW"/>
</dbReference>
<dbReference type="GO" id="GO:0006364">
    <property type="term" value="P:rRNA processing"/>
    <property type="evidence" value="ECO:0007669"/>
    <property type="project" value="UniProtKB-UniRule"/>
</dbReference>
<dbReference type="Gene3D" id="3.30.2300.20">
    <property type="match status" value="1"/>
</dbReference>
<dbReference type="Gene3D" id="3.30.70.2810">
    <property type="match status" value="1"/>
</dbReference>
<dbReference type="Gene3D" id="3.40.50.150">
    <property type="entry name" value="Vaccinia Virus protein VP39"/>
    <property type="match status" value="1"/>
</dbReference>
<dbReference type="HAMAP" id="MF_01551">
    <property type="entry name" value="23SrRNA_methyltr_M"/>
    <property type="match status" value="1"/>
</dbReference>
<dbReference type="InterPro" id="IPR040739">
    <property type="entry name" value="RlmM_FDX"/>
</dbReference>
<dbReference type="InterPro" id="IPR048646">
    <property type="entry name" value="RlmM_THUMP-like"/>
</dbReference>
<dbReference type="InterPro" id="IPR002877">
    <property type="entry name" value="RNA_MeTrfase_FtsJ_dom"/>
</dbReference>
<dbReference type="InterPro" id="IPR011224">
    <property type="entry name" value="rRNA_MeTrfase_M"/>
</dbReference>
<dbReference type="InterPro" id="IPR029063">
    <property type="entry name" value="SAM-dependent_MTases_sf"/>
</dbReference>
<dbReference type="NCBIfam" id="NF008734">
    <property type="entry name" value="PRK11760.1"/>
    <property type="match status" value="1"/>
</dbReference>
<dbReference type="PANTHER" id="PTHR37524">
    <property type="entry name" value="RIBOSOMAL RNA LARGE SUBUNIT METHYLTRANSFERASE M"/>
    <property type="match status" value="1"/>
</dbReference>
<dbReference type="PANTHER" id="PTHR37524:SF2">
    <property type="entry name" value="RIBOSOMAL RNA METHYLTRANSFERASE FTSJ DOMAIN-CONTAINING PROTEIN"/>
    <property type="match status" value="1"/>
</dbReference>
<dbReference type="Pfam" id="PF01728">
    <property type="entry name" value="FtsJ"/>
    <property type="match status" value="1"/>
</dbReference>
<dbReference type="Pfam" id="PF18125">
    <property type="entry name" value="RlmM_FDX"/>
    <property type="match status" value="1"/>
</dbReference>
<dbReference type="Pfam" id="PF21239">
    <property type="entry name" value="RLMM_N"/>
    <property type="match status" value="1"/>
</dbReference>
<dbReference type="PIRSF" id="PIRSF028774">
    <property type="entry name" value="UCP028774"/>
    <property type="match status" value="1"/>
</dbReference>
<dbReference type="SUPFAM" id="SSF53335">
    <property type="entry name" value="S-adenosyl-L-methionine-dependent methyltransferases"/>
    <property type="match status" value="1"/>
</dbReference>
<accession>Q12L35</accession>
<protein>
    <recommendedName>
        <fullName evidence="1">Ribosomal RNA large subunit methyltransferase M</fullName>
        <ecNumber evidence="1">2.1.1.186</ecNumber>
    </recommendedName>
    <alternativeName>
        <fullName evidence="1">23S rRNA (cytidine2498-2'-O)-methyltransferase</fullName>
    </alternativeName>
    <alternativeName>
        <fullName evidence="1">23S rRNA 2'-O-ribose methyltransferase RlmM</fullName>
    </alternativeName>
</protein>
<organism>
    <name type="scientific">Shewanella denitrificans (strain OS217 / ATCC BAA-1090 / DSM 15013)</name>
    <dbReference type="NCBI Taxonomy" id="318161"/>
    <lineage>
        <taxon>Bacteria</taxon>
        <taxon>Pseudomonadati</taxon>
        <taxon>Pseudomonadota</taxon>
        <taxon>Gammaproteobacteria</taxon>
        <taxon>Alteromonadales</taxon>
        <taxon>Shewanellaceae</taxon>
        <taxon>Shewanella</taxon>
    </lineage>
</organism>
<keyword id="KW-0963">Cytoplasm</keyword>
<keyword id="KW-0489">Methyltransferase</keyword>
<keyword id="KW-1185">Reference proteome</keyword>
<keyword id="KW-0698">rRNA processing</keyword>
<keyword id="KW-0949">S-adenosyl-L-methionine</keyword>
<keyword id="KW-0808">Transferase</keyword>